<feature type="chain" id="PRO_1000078547" description="Glycine--tRNA ligase beta subunit">
    <location>
        <begin position="1"/>
        <end position="689"/>
    </location>
</feature>
<gene>
    <name evidence="1" type="primary">glyS</name>
    <name type="ordered locus">Sbal195_0012</name>
</gene>
<reference key="1">
    <citation type="submission" date="2007-11" db="EMBL/GenBank/DDBJ databases">
        <title>Complete sequence of chromosome of Shewanella baltica OS195.</title>
        <authorList>
            <consortium name="US DOE Joint Genome Institute"/>
            <person name="Copeland A."/>
            <person name="Lucas S."/>
            <person name="Lapidus A."/>
            <person name="Barry K."/>
            <person name="Glavina del Rio T."/>
            <person name="Dalin E."/>
            <person name="Tice H."/>
            <person name="Pitluck S."/>
            <person name="Chain P."/>
            <person name="Malfatti S."/>
            <person name="Shin M."/>
            <person name="Vergez L."/>
            <person name="Schmutz J."/>
            <person name="Larimer F."/>
            <person name="Land M."/>
            <person name="Hauser L."/>
            <person name="Kyrpides N."/>
            <person name="Kim E."/>
            <person name="Brettar I."/>
            <person name="Rodrigues J."/>
            <person name="Konstantinidis K."/>
            <person name="Klappenbach J."/>
            <person name="Hofle M."/>
            <person name="Tiedje J."/>
            <person name="Richardson P."/>
        </authorList>
    </citation>
    <scope>NUCLEOTIDE SEQUENCE [LARGE SCALE GENOMIC DNA]</scope>
    <source>
        <strain>OS195</strain>
    </source>
</reference>
<protein>
    <recommendedName>
        <fullName evidence="1">Glycine--tRNA ligase beta subunit</fullName>
        <ecNumber evidence="1">6.1.1.14</ecNumber>
    </recommendedName>
    <alternativeName>
        <fullName evidence="1">Glycyl-tRNA synthetase beta subunit</fullName>
        <shortName evidence="1">GlyRS</shortName>
    </alternativeName>
</protein>
<name>SYGB_SHEB9</name>
<proteinExistence type="inferred from homology"/>
<comment type="catalytic activity">
    <reaction evidence="1">
        <text>tRNA(Gly) + glycine + ATP = glycyl-tRNA(Gly) + AMP + diphosphate</text>
        <dbReference type="Rhea" id="RHEA:16013"/>
        <dbReference type="Rhea" id="RHEA-COMP:9664"/>
        <dbReference type="Rhea" id="RHEA-COMP:9683"/>
        <dbReference type="ChEBI" id="CHEBI:30616"/>
        <dbReference type="ChEBI" id="CHEBI:33019"/>
        <dbReference type="ChEBI" id="CHEBI:57305"/>
        <dbReference type="ChEBI" id="CHEBI:78442"/>
        <dbReference type="ChEBI" id="CHEBI:78522"/>
        <dbReference type="ChEBI" id="CHEBI:456215"/>
        <dbReference type="EC" id="6.1.1.14"/>
    </reaction>
</comment>
<comment type="subunit">
    <text evidence="1">Tetramer of two alpha and two beta subunits.</text>
</comment>
<comment type="subcellular location">
    <subcellularLocation>
        <location evidence="1">Cytoplasm</location>
    </subcellularLocation>
</comment>
<comment type="similarity">
    <text evidence="1">Belongs to the class-II aminoacyl-tRNA synthetase family.</text>
</comment>
<keyword id="KW-0030">Aminoacyl-tRNA synthetase</keyword>
<keyword id="KW-0067">ATP-binding</keyword>
<keyword id="KW-0963">Cytoplasm</keyword>
<keyword id="KW-0436">Ligase</keyword>
<keyword id="KW-0547">Nucleotide-binding</keyword>
<keyword id="KW-0648">Protein biosynthesis</keyword>
<accession>A9KU83</accession>
<dbReference type="EC" id="6.1.1.14" evidence="1"/>
<dbReference type="EMBL" id="CP000891">
    <property type="protein sequence ID" value="ABX47194.1"/>
    <property type="molecule type" value="Genomic_DNA"/>
</dbReference>
<dbReference type="RefSeq" id="WP_012196463.1">
    <property type="nucleotide sequence ID" value="NC_009997.1"/>
</dbReference>
<dbReference type="SMR" id="A9KU83"/>
<dbReference type="GeneID" id="11770382"/>
<dbReference type="KEGG" id="sbn:Sbal195_0012"/>
<dbReference type="HOGENOM" id="CLU_007220_2_2_6"/>
<dbReference type="Proteomes" id="UP000000770">
    <property type="component" value="Chromosome"/>
</dbReference>
<dbReference type="GO" id="GO:0005829">
    <property type="term" value="C:cytosol"/>
    <property type="evidence" value="ECO:0007669"/>
    <property type="project" value="TreeGrafter"/>
</dbReference>
<dbReference type="GO" id="GO:0004814">
    <property type="term" value="F:arginine-tRNA ligase activity"/>
    <property type="evidence" value="ECO:0007669"/>
    <property type="project" value="InterPro"/>
</dbReference>
<dbReference type="GO" id="GO:0005524">
    <property type="term" value="F:ATP binding"/>
    <property type="evidence" value="ECO:0007669"/>
    <property type="project" value="UniProtKB-UniRule"/>
</dbReference>
<dbReference type="GO" id="GO:0004820">
    <property type="term" value="F:glycine-tRNA ligase activity"/>
    <property type="evidence" value="ECO:0007669"/>
    <property type="project" value="UniProtKB-UniRule"/>
</dbReference>
<dbReference type="GO" id="GO:0006420">
    <property type="term" value="P:arginyl-tRNA aminoacylation"/>
    <property type="evidence" value="ECO:0007669"/>
    <property type="project" value="InterPro"/>
</dbReference>
<dbReference type="GO" id="GO:0006426">
    <property type="term" value="P:glycyl-tRNA aminoacylation"/>
    <property type="evidence" value="ECO:0007669"/>
    <property type="project" value="UniProtKB-UniRule"/>
</dbReference>
<dbReference type="Gene3D" id="1.10.730.10">
    <property type="entry name" value="Isoleucyl-tRNA Synthetase, Domain 1"/>
    <property type="match status" value="1"/>
</dbReference>
<dbReference type="HAMAP" id="MF_00255">
    <property type="entry name" value="Gly_tRNA_synth_beta"/>
    <property type="match status" value="1"/>
</dbReference>
<dbReference type="InterPro" id="IPR008909">
    <property type="entry name" value="DALR_anticod-bd"/>
</dbReference>
<dbReference type="InterPro" id="IPR015944">
    <property type="entry name" value="Gly-tRNA-synth_bsu"/>
</dbReference>
<dbReference type="InterPro" id="IPR006194">
    <property type="entry name" value="Gly-tRNA-synth_heterodimer"/>
</dbReference>
<dbReference type="NCBIfam" id="TIGR00211">
    <property type="entry name" value="glyS"/>
    <property type="match status" value="1"/>
</dbReference>
<dbReference type="PANTHER" id="PTHR30075:SF2">
    <property type="entry name" value="GLYCINE--TRNA LIGASE, CHLOROPLASTIC_MITOCHONDRIAL 2"/>
    <property type="match status" value="1"/>
</dbReference>
<dbReference type="PANTHER" id="PTHR30075">
    <property type="entry name" value="GLYCYL-TRNA SYNTHETASE"/>
    <property type="match status" value="1"/>
</dbReference>
<dbReference type="Pfam" id="PF05746">
    <property type="entry name" value="DALR_1"/>
    <property type="match status" value="1"/>
</dbReference>
<dbReference type="Pfam" id="PF02092">
    <property type="entry name" value="tRNA_synt_2f"/>
    <property type="match status" value="1"/>
</dbReference>
<dbReference type="PRINTS" id="PR01045">
    <property type="entry name" value="TRNASYNTHGB"/>
</dbReference>
<dbReference type="SMART" id="SM00836">
    <property type="entry name" value="DALR_1"/>
    <property type="match status" value="1"/>
</dbReference>
<dbReference type="SUPFAM" id="SSF109604">
    <property type="entry name" value="HD-domain/PDEase-like"/>
    <property type="match status" value="1"/>
</dbReference>
<dbReference type="PROSITE" id="PS50861">
    <property type="entry name" value="AA_TRNA_LIGASE_II_GLYAB"/>
    <property type="match status" value="1"/>
</dbReference>
<sequence length="689" mass="75147">MNFENLLIELGTEELPPKSLRKLAESFLANFTEELTKADLAFSSAVWYAAPRRLAIKVTELALAQADKVVEKRGPAVSSAFDAEGKPTKAAEGWARGNGITVEQAERLVTDKGEWLVHNAKVEGVETKSLIAAMAQRALDKLPIPKPMRWGNNKTQFIRPVHTATMLLGSELIEGELLGIKSARTVRGHRFMGLKQFELAHADHYLADLKEKGKVIADYESRKALIKADAEKAAAKIGGTADIEDSLLEEVASLVEWPVVLTASFEEKFLAVPSEALVYTMKGDQKYFPVFDDAGKLLPNFIFVTNIESKDPAQIISGNEKVVRPRLADAEFFFNTDKKHTLESRLPSLETVLFQQQLGTLKDKVNRISALAAFIAEQTGANAVDAARAGLLSKTDLMTNMVMEFTDTQGTMGMHYARLDGETEAVAVAMEEQYKPKFSGDTVPSAGVSCAVALADKLDTLVGIFGIGQAPKGAADPFALRRAAIGVLRIIVENKLPLDLVTLIAKAQELHGTNLSNANAAEEVLEFLMARFRAWYQDKGIGVDVILAVLARRPTRPADFDSRINAVSHFRSLEASSALAAANKRVSNILAKVEGALPTTINASLLTEAAEQALAAKLNELQPQLAPLFANADYQQALTLLAGLRESVDQFFEDVMVMADDEALKNNRLALLNNLREQFLHVADISLLQ</sequence>
<evidence type="ECO:0000255" key="1">
    <source>
        <dbReference type="HAMAP-Rule" id="MF_00255"/>
    </source>
</evidence>
<organism>
    <name type="scientific">Shewanella baltica (strain OS195)</name>
    <dbReference type="NCBI Taxonomy" id="399599"/>
    <lineage>
        <taxon>Bacteria</taxon>
        <taxon>Pseudomonadati</taxon>
        <taxon>Pseudomonadota</taxon>
        <taxon>Gammaproteobacteria</taxon>
        <taxon>Alteromonadales</taxon>
        <taxon>Shewanellaceae</taxon>
        <taxon>Shewanella</taxon>
    </lineage>
</organism>